<dbReference type="EMBL" id="AY916449">
    <property type="protein sequence ID" value="AAW82529.1"/>
    <property type="molecule type" value="Genomic_DNA"/>
</dbReference>
<dbReference type="RefSeq" id="YP_358611.1">
    <property type="nucleotide sequence ID" value="NC_007499.1"/>
</dbReference>
<dbReference type="SMR" id="Q3BAK7"/>
<dbReference type="GeneID" id="3741710"/>
<dbReference type="GO" id="GO:0009535">
    <property type="term" value="C:chloroplast thylakoid membrane"/>
    <property type="evidence" value="ECO:0007669"/>
    <property type="project" value="UniProtKB-SubCell"/>
</dbReference>
<dbReference type="GO" id="GO:0045158">
    <property type="term" value="F:electron transporter, transferring electrons within cytochrome b6/f complex of photosystem II activity"/>
    <property type="evidence" value="ECO:0007669"/>
    <property type="project" value="UniProtKB-UniRule"/>
</dbReference>
<dbReference type="GO" id="GO:0046872">
    <property type="term" value="F:metal ion binding"/>
    <property type="evidence" value="ECO:0007669"/>
    <property type="project" value="UniProtKB-KW"/>
</dbReference>
<dbReference type="GO" id="GO:0016491">
    <property type="term" value="F:oxidoreductase activity"/>
    <property type="evidence" value="ECO:0007669"/>
    <property type="project" value="InterPro"/>
</dbReference>
<dbReference type="GO" id="GO:0015979">
    <property type="term" value="P:photosynthesis"/>
    <property type="evidence" value="ECO:0007669"/>
    <property type="project" value="UniProtKB-UniRule"/>
</dbReference>
<dbReference type="GO" id="GO:0022904">
    <property type="term" value="P:respiratory electron transport chain"/>
    <property type="evidence" value="ECO:0007669"/>
    <property type="project" value="InterPro"/>
</dbReference>
<dbReference type="CDD" id="cd00284">
    <property type="entry name" value="Cytochrome_b_N"/>
    <property type="match status" value="1"/>
</dbReference>
<dbReference type="FunFam" id="1.20.810.10:FF:000001">
    <property type="entry name" value="Cytochrome b6"/>
    <property type="match status" value="1"/>
</dbReference>
<dbReference type="Gene3D" id="1.20.810.10">
    <property type="entry name" value="Cytochrome Bc1 Complex, Chain C"/>
    <property type="match status" value="1"/>
</dbReference>
<dbReference type="HAMAP" id="MF_00633">
    <property type="entry name" value="Cytb6_f_cytb6"/>
    <property type="match status" value="1"/>
</dbReference>
<dbReference type="InterPro" id="IPR005797">
    <property type="entry name" value="Cyt_b/b6_N"/>
</dbReference>
<dbReference type="InterPro" id="IPR023530">
    <property type="entry name" value="Cyt_B6_PetB"/>
</dbReference>
<dbReference type="InterPro" id="IPR027387">
    <property type="entry name" value="Cytb/b6-like_sf"/>
</dbReference>
<dbReference type="InterPro" id="IPR048259">
    <property type="entry name" value="Cytochrome_b_N_euk/bac"/>
</dbReference>
<dbReference type="InterPro" id="IPR016174">
    <property type="entry name" value="Di-haem_cyt_TM"/>
</dbReference>
<dbReference type="NCBIfam" id="NF002990">
    <property type="entry name" value="PRK03735.1"/>
    <property type="match status" value="1"/>
</dbReference>
<dbReference type="PANTHER" id="PTHR19271">
    <property type="entry name" value="CYTOCHROME B"/>
    <property type="match status" value="1"/>
</dbReference>
<dbReference type="PANTHER" id="PTHR19271:SF16">
    <property type="entry name" value="CYTOCHROME B"/>
    <property type="match status" value="1"/>
</dbReference>
<dbReference type="Pfam" id="PF00033">
    <property type="entry name" value="Cytochrome_B"/>
    <property type="match status" value="1"/>
</dbReference>
<dbReference type="PIRSF" id="PIRSF000032">
    <property type="entry name" value="Cytochrome_b6"/>
    <property type="match status" value="1"/>
</dbReference>
<dbReference type="SUPFAM" id="SSF81342">
    <property type="entry name" value="Transmembrane di-heme cytochromes"/>
    <property type="match status" value="1"/>
</dbReference>
<dbReference type="PROSITE" id="PS51002">
    <property type="entry name" value="CYTB_NTER"/>
    <property type="match status" value="1"/>
</dbReference>
<gene>
    <name evidence="1" type="primary">petB</name>
</gene>
<evidence type="ECO:0000255" key="1">
    <source>
        <dbReference type="HAMAP-Rule" id="MF_00633"/>
    </source>
</evidence>
<accession>Q3BAK7</accession>
<sequence length="215" mass="24195">MSKVYDWFEERLEIQAIADDITSKYVPPHVNIFYCLGGITLTCFLVQVATGFAMTFYYRPTVTEAFSSVQYIMTEANFGWLIRSVHRWSASMMVLMMILHVFRVYLTGGFKKPRELTWVTGVVLAVLTASFGVTGYSLPWDQIGYWAVKIVTGVPEAIPIIGSPLVELLRGSASVGQSTLTRFYSLHTFVLPLLTAVFMLMHFPMIRKQGISGPL</sequence>
<geneLocation type="chloroplast"/>
<proteinExistence type="inferred from homology"/>
<protein>
    <recommendedName>
        <fullName evidence="1">Cytochrome b6</fullName>
    </recommendedName>
</protein>
<comment type="function">
    <text evidence="1">Component of the cytochrome b6-f complex, which mediates electron transfer between photosystem II (PSII) and photosystem I (PSI), cyclic electron flow around PSI, and state transitions.</text>
</comment>
<comment type="cofactor">
    <cofactor evidence="1">
        <name>heme b</name>
        <dbReference type="ChEBI" id="CHEBI:60344"/>
    </cofactor>
    <text evidence="1">Binds 2 heme b groups non-covalently with two histidine residues as axial ligands.</text>
</comment>
<comment type="cofactor">
    <cofactor evidence="1">
        <name>heme c</name>
        <dbReference type="ChEBI" id="CHEBI:61717"/>
    </cofactor>
    <text evidence="1">Binds one heme group covalently by a single cysteine link with no axial amino acid ligand. This heme was named heme ci.</text>
</comment>
<comment type="subunit">
    <text evidence="1">The 4 large subunits of the cytochrome b6-f complex are cytochrome b6, subunit IV (17 kDa polypeptide, PetD), cytochrome f and the Rieske protein, while the 4 small subunits are PetG, PetL, PetM and PetN. The complex functions as a dimer.</text>
</comment>
<comment type="subcellular location">
    <subcellularLocation>
        <location evidence="1">Plastid</location>
        <location evidence="1">Chloroplast thylakoid membrane</location>
        <topology evidence="1">Multi-pass membrane protein</topology>
    </subcellularLocation>
</comment>
<comment type="miscellaneous">
    <text evidence="1">Heme 1 (or BH or b566) is high-potential and absorbs at about 566 nm, and heme 2 (or BL or b562) is low-potential and absorbs at about 562 nm.</text>
</comment>
<comment type="similarity">
    <text evidence="1">Belongs to the cytochrome b family. PetB subfamily.</text>
</comment>
<keyword id="KW-0150">Chloroplast</keyword>
<keyword id="KW-0249">Electron transport</keyword>
<keyword id="KW-0349">Heme</keyword>
<keyword id="KW-0408">Iron</keyword>
<keyword id="KW-0472">Membrane</keyword>
<keyword id="KW-0479">Metal-binding</keyword>
<keyword id="KW-0602">Photosynthesis</keyword>
<keyword id="KW-0934">Plastid</keyword>
<keyword id="KW-0793">Thylakoid</keyword>
<keyword id="KW-0812">Transmembrane</keyword>
<keyword id="KW-1133">Transmembrane helix</keyword>
<keyword id="KW-0813">Transport</keyword>
<organism>
    <name type="scientific">Phalaenopsis aphrodite subsp. formosana</name>
    <name type="common">Moth orchid</name>
    <dbReference type="NCBI Taxonomy" id="308872"/>
    <lineage>
        <taxon>Eukaryota</taxon>
        <taxon>Viridiplantae</taxon>
        <taxon>Streptophyta</taxon>
        <taxon>Embryophyta</taxon>
        <taxon>Tracheophyta</taxon>
        <taxon>Spermatophyta</taxon>
        <taxon>Magnoliopsida</taxon>
        <taxon>Liliopsida</taxon>
        <taxon>Asparagales</taxon>
        <taxon>Orchidaceae</taxon>
        <taxon>Epidendroideae</taxon>
        <taxon>Vandeae</taxon>
        <taxon>Aeridinae</taxon>
        <taxon>Phalaenopsis</taxon>
    </lineage>
</organism>
<reference key="1">
    <citation type="journal article" date="2006" name="Mol. Biol. Evol.">
        <title>The chloroplast genome of Phalaenopsis aphrodite (Orchidaceae): comparative analysis of evolutionary rate with that of grasses and its phylogenetic implications.</title>
        <authorList>
            <person name="Chang C.-C."/>
            <person name="Lin H.-C."/>
            <person name="Lin I.-P."/>
            <person name="Chow T.-Y."/>
            <person name="Chen H.-H."/>
            <person name="Chen W.-H."/>
            <person name="Cheng C.-H."/>
            <person name="Lin C.-Y."/>
            <person name="Liu S.-M."/>
            <person name="Chang C.-C."/>
            <person name="Chaw S.-M."/>
        </authorList>
    </citation>
    <scope>NUCLEOTIDE SEQUENCE [LARGE SCALE GENOMIC DNA]</scope>
    <source>
        <strain>cv. Taisugar TS-97</strain>
    </source>
</reference>
<feature type="chain" id="PRO_0000275329" description="Cytochrome b6">
    <location>
        <begin position="1"/>
        <end position="215"/>
    </location>
</feature>
<feature type="transmembrane region" description="Helical" evidence="1">
    <location>
        <begin position="32"/>
        <end position="52"/>
    </location>
</feature>
<feature type="transmembrane region" description="Helical" evidence="1">
    <location>
        <begin position="90"/>
        <end position="110"/>
    </location>
</feature>
<feature type="transmembrane region" description="Helical" evidence="1">
    <location>
        <begin position="116"/>
        <end position="136"/>
    </location>
</feature>
<feature type="transmembrane region" description="Helical" evidence="1">
    <location>
        <begin position="186"/>
        <end position="206"/>
    </location>
</feature>
<feature type="binding site" description="covalent" evidence="1">
    <location>
        <position position="35"/>
    </location>
    <ligand>
        <name>heme c</name>
        <dbReference type="ChEBI" id="CHEBI:61717"/>
    </ligand>
</feature>
<feature type="binding site" description="axial binding residue" evidence="1">
    <location>
        <position position="86"/>
    </location>
    <ligand>
        <name>heme b</name>
        <dbReference type="ChEBI" id="CHEBI:60344"/>
        <label>2</label>
    </ligand>
    <ligandPart>
        <name>Fe</name>
        <dbReference type="ChEBI" id="CHEBI:18248"/>
    </ligandPart>
</feature>
<feature type="binding site" description="axial binding residue" evidence="1">
    <location>
        <position position="100"/>
    </location>
    <ligand>
        <name>heme b</name>
        <dbReference type="ChEBI" id="CHEBI:60344"/>
        <label>1</label>
    </ligand>
    <ligandPart>
        <name>Fe</name>
        <dbReference type="ChEBI" id="CHEBI:18248"/>
    </ligandPart>
</feature>
<feature type="binding site" description="axial binding residue" evidence="1">
    <location>
        <position position="187"/>
    </location>
    <ligand>
        <name>heme b</name>
        <dbReference type="ChEBI" id="CHEBI:60344"/>
        <label>2</label>
    </ligand>
    <ligandPart>
        <name>Fe</name>
        <dbReference type="ChEBI" id="CHEBI:18248"/>
    </ligandPart>
</feature>
<feature type="binding site" description="axial binding residue" evidence="1">
    <location>
        <position position="202"/>
    </location>
    <ligand>
        <name>heme b</name>
        <dbReference type="ChEBI" id="CHEBI:60344"/>
        <label>1</label>
    </ligand>
    <ligandPart>
        <name>Fe</name>
        <dbReference type="ChEBI" id="CHEBI:18248"/>
    </ligandPart>
</feature>
<name>CYB6_PHAAO</name>